<keyword id="KW-0002">3D-structure</keyword>
<keyword id="KW-0227">DNA damage</keyword>
<keyword id="KW-0233">DNA recombination</keyword>
<keyword id="KW-0234">DNA repair</keyword>
<keyword id="KW-0235">DNA replication</keyword>
<keyword id="KW-0238">DNA-binding</keyword>
<organism>
    <name type="scientific">Klebsiella pneumoniae subsp. pneumoniae (strain ATCC 700721 / MGH 78578)</name>
    <dbReference type="NCBI Taxonomy" id="272620"/>
    <lineage>
        <taxon>Bacteria</taxon>
        <taxon>Pseudomonadati</taxon>
        <taxon>Pseudomonadota</taxon>
        <taxon>Gammaproteobacteria</taxon>
        <taxon>Enterobacterales</taxon>
        <taxon>Enterobacteriaceae</taxon>
        <taxon>Klebsiella/Raoultella group</taxon>
        <taxon>Klebsiella</taxon>
        <taxon>Klebsiella pneumoniae complex</taxon>
    </lineage>
</organism>
<name>SSB1_KLEP7</name>
<dbReference type="EMBL" id="CP000647">
    <property type="protein sequence ID" value="ABR79801.1"/>
    <property type="molecule type" value="Genomic_DNA"/>
</dbReference>
<dbReference type="RefSeq" id="WP_004151744.1">
    <property type="nucleotide sequence ID" value="NC_009648.1"/>
</dbReference>
<dbReference type="PDB" id="4NL8">
    <property type="method" value="X-ray"/>
    <property type="resolution" value="4.08 A"/>
    <property type="chains" value="C/D/F=166-174"/>
</dbReference>
<dbReference type="PDB" id="7F2N">
    <property type="method" value="X-ray"/>
    <property type="resolution" value="2.35 A"/>
    <property type="chains" value="A/B/C/D=1-174"/>
</dbReference>
<dbReference type="PDBsum" id="4NL8"/>
<dbReference type="PDBsum" id="7F2N"/>
<dbReference type="SMR" id="A6TGW7"/>
<dbReference type="STRING" id="272620.KPN_04446"/>
<dbReference type="PaxDb" id="272620-KPN_04446"/>
<dbReference type="EnsemblBacteria" id="ABR79801">
    <property type="protein sequence ID" value="ABR79801"/>
    <property type="gene ID" value="KPN_04446"/>
</dbReference>
<dbReference type="GeneID" id="93251793"/>
<dbReference type="KEGG" id="kpn:KPN_04446"/>
<dbReference type="HOGENOM" id="CLU_078758_0_2_6"/>
<dbReference type="Proteomes" id="UP000000265">
    <property type="component" value="Chromosome"/>
</dbReference>
<dbReference type="GO" id="GO:0009295">
    <property type="term" value="C:nucleoid"/>
    <property type="evidence" value="ECO:0007669"/>
    <property type="project" value="TreeGrafter"/>
</dbReference>
<dbReference type="GO" id="GO:0003697">
    <property type="term" value="F:single-stranded DNA binding"/>
    <property type="evidence" value="ECO:0007669"/>
    <property type="project" value="UniProtKB-UniRule"/>
</dbReference>
<dbReference type="GO" id="GO:0006310">
    <property type="term" value="P:DNA recombination"/>
    <property type="evidence" value="ECO:0007669"/>
    <property type="project" value="UniProtKB-UniRule"/>
</dbReference>
<dbReference type="GO" id="GO:0006281">
    <property type="term" value="P:DNA repair"/>
    <property type="evidence" value="ECO:0007669"/>
    <property type="project" value="UniProtKB-UniRule"/>
</dbReference>
<dbReference type="GO" id="GO:0006260">
    <property type="term" value="P:DNA replication"/>
    <property type="evidence" value="ECO:0007669"/>
    <property type="project" value="UniProtKB-UniRule"/>
</dbReference>
<dbReference type="CDD" id="cd04496">
    <property type="entry name" value="SSB_OBF"/>
    <property type="match status" value="1"/>
</dbReference>
<dbReference type="FunFam" id="2.40.50.140:FF:000065">
    <property type="entry name" value="Single-stranded DNA-binding protein"/>
    <property type="match status" value="1"/>
</dbReference>
<dbReference type="Gene3D" id="2.40.50.140">
    <property type="entry name" value="Nucleic acid-binding proteins"/>
    <property type="match status" value="1"/>
</dbReference>
<dbReference type="HAMAP" id="MF_00984">
    <property type="entry name" value="SSB"/>
    <property type="match status" value="1"/>
</dbReference>
<dbReference type="InterPro" id="IPR012340">
    <property type="entry name" value="NA-bd_OB-fold"/>
</dbReference>
<dbReference type="InterPro" id="IPR000424">
    <property type="entry name" value="Primosome_PriB/ssb"/>
</dbReference>
<dbReference type="InterPro" id="IPR011344">
    <property type="entry name" value="ssDNA-bd"/>
</dbReference>
<dbReference type="NCBIfam" id="NF006533">
    <property type="entry name" value="PRK09010.1"/>
    <property type="match status" value="1"/>
</dbReference>
<dbReference type="NCBIfam" id="TIGR00621">
    <property type="entry name" value="ssb"/>
    <property type="match status" value="1"/>
</dbReference>
<dbReference type="PANTHER" id="PTHR10302">
    <property type="entry name" value="SINGLE-STRANDED DNA-BINDING PROTEIN"/>
    <property type="match status" value="1"/>
</dbReference>
<dbReference type="PANTHER" id="PTHR10302:SF27">
    <property type="entry name" value="SINGLE-STRANDED DNA-BINDING PROTEIN"/>
    <property type="match status" value="1"/>
</dbReference>
<dbReference type="Pfam" id="PF00436">
    <property type="entry name" value="SSB"/>
    <property type="match status" value="1"/>
</dbReference>
<dbReference type="PIRSF" id="PIRSF002070">
    <property type="entry name" value="SSB"/>
    <property type="match status" value="1"/>
</dbReference>
<dbReference type="SUPFAM" id="SSF50249">
    <property type="entry name" value="Nucleic acid-binding proteins"/>
    <property type="match status" value="1"/>
</dbReference>
<dbReference type="PROSITE" id="PS50935">
    <property type="entry name" value="SSB"/>
    <property type="match status" value="1"/>
</dbReference>
<feature type="chain" id="PRO_0000462144" description="Single-stranded DNA-binding protein 1">
    <location>
        <begin position="1"/>
        <end position="174"/>
    </location>
</feature>
<feature type="domain" description="SSB" evidence="1">
    <location>
        <begin position="6"/>
        <end position="111"/>
    </location>
</feature>
<feature type="DNA-binding region" evidence="1">
    <location>
        <begin position="55"/>
        <end position="61"/>
    </location>
</feature>
<feature type="region of interest" description="Disordered" evidence="2">
    <location>
        <begin position="110"/>
        <end position="174"/>
    </location>
</feature>
<feature type="short sequence motif" description="Important for interaction with partner proteins" evidence="1">
    <location>
        <begin position="169"/>
        <end position="174"/>
    </location>
</feature>
<feature type="compositionally biased region" description="Gly residues" evidence="2">
    <location>
        <begin position="115"/>
        <end position="133"/>
    </location>
</feature>
<feature type="compositionally biased region" description="Low complexity" evidence="2">
    <location>
        <begin position="134"/>
        <end position="160"/>
    </location>
</feature>
<evidence type="ECO:0000255" key="1">
    <source>
        <dbReference type="HAMAP-Rule" id="MF_00984"/>
    </source>
</evidence>
<evidence type="ECO:0000256" key="2">
    <source>
        <dbReference type="SAM" id="MobiDB-lite"/>
    </source>
</evidence>
<evidence type="ECO:0000269" key="3">
    <source>
    </source>
</evidence>
<evidence type="ECO:0000269" key="4">
    <source>
    </source>
</evidence>
<evidence type="ECO:0000312" key="5">
    <source>
        <dbReference type="EMBL" id="ABR79801.1"/>
    </source>
</evidence>
<evidence type="ECO:0007744" key="6">
    <source>
        <dbReference type="PDB" id="4NL8"/>
    </source>
</evidence>
<evidence type="ECO:0007744" key="7">
    <source>
        <dbReference type="PDB" id="7F2N"/>
    </source>
</evidence>
<sequence length="174" mass="18712">MASRGVNKVILVGNLGQDPEVRYMPSGGAVANFTLATSESWRDKQTGEMKEQTEWHRVVLFGKLAEVAGEYLRKGSQVYIEGQLRTRKWTDQSGQDKYTTEVVVNVGGTMQMLGGRQGGGAPAGGGQQQGGWGQPQQPQGGNQFSGGAQSRPQQQAPAAPSNEPPMDFDDDIPF</sequence>
<proteinExistence type="evidence at protein level"/>
<protein>
    <recommendedName>
        <fullName evidence="1">Single-stranded DNA-binding protein 1</fullName>
        <shortName evidence="1">SSB 1</shortName>
    </recommendedName>
</protein>
<accession>A6TGW7</accession>
<comment type="function">
    <text evidence="1 4">Plays an important role in DNA replication, recombination and repair. Binds to ssDNA and to an array of partner proteins to recruit them to their sites of action during DNA metabolism. Stimulates the ATPase activity of PriA (PubMed:34639195). One tetramer binds to 26 nucleotides (nt) of ssDNA, a 55 nt piece of ssDNA probably binds 2 tetramers (PubMed:34639195).</text>
</comment>
<comment type="subunit">
    <text evidence="1 3">Homotetramer (PubMed:34639195). Binds PriA via its C-terminus (PubMed:24379377).</text>
</comment>
<reference evidence="5" key="1">
    <citation type="submission" date="2006-09" db="EMBL/GenBank/DDBJ databases">
        <authorList>
            <consortium name="The Klebsiella pneumonia Genome Sequencing Project"/>
            <person name="McClelland M."/>
            <person name="Sanderson E.K."/>
            <person name="Spieth J."/>
            <person name="Clifton W.S."/>
            <person name="Latreille P."/>
            <person name="Sabo A."/>
            <person name="Pepin K."/>
            <person name="Bhonagiri V."/>
            <person name="Porwollik S."/>
            <person name="Ali J."/>
            <person name="Wilson R.K."/>
        </authorList>
    </citation>
    <scope>NUCLEOTIDE SEQUENCE [LARGE SCALE GENOMIC DNA]</scope>
    <source>
        <strain>ATCC 700721 / MGH 78578</strain>
    </source>
</reference>
<reference evidence="6" key="2">
    <citation type="journal article" date="2014" name="Proc. Natl. Acad. Sci. U.S.A.">
        <title>Structural mechanisms of PriA-mediated DNA replication restart.</title>
        <authorList>
            <person name="Bhattacharyya B."/>
            <person name="George N.P."/>
            <person name="Thurmes T.M."/>
            <person name="Zhou R."/>
            <person name="Jani N."/>
            <person name="Wessel S.R."/>
            <person name="Sandler S.J."/>
            <person name="Ha T."/>
            <person name="Keck J.L."/>
        </authorList>
    </citation>
    <scope>X-RAY CRYSTALLOGRAPHY (4.08 ANGSTROMS) OF 166-174 IN COMPLEX WITH PRIA</scope>
    <scope>SUBUNIT</scope>
    <source>
        <strain>ATCC 700721 / MGH 78578</strain>
    </source>
</reference>
<reference evidence="7" key="3">
    <citation type="journal article" date="2021" name="Int. J. Mol. Sci.">
        <title>Characterization of the Chimeric PriB-SSBc Protein.</title>
        <authorList>
            <person name="Lin E.S."/>
            <person name="Huang Y.H."/>
            <person name="Huang C.Y."/>
        </authorList>
    </citation>
    <scope>X-RAY CRYSTALLOGRAPHY (2.35 ANGSTROMS)</scope>
    <scope>FUNCTION</scope>
    <scope>SUBUNIT</scope>
    <scope>DNA-BINDING</scope>
</reference>
<gene>
    <name evidence="5" type="primary">ssb1</name>
    <name evidence="5" type="ORF">KPN_04446</name>
</gene>